<dbReference type="EC" id="2.3.1.234" evidence="1"/>
<dbReference type="EMBL" id="CP000922">
    <property type="protein sequence ID" value="ACJ32590.1"/>
    <property type="molecule type" value="Genomic_DNA"/>
</dbReference>
<dbReference type="SMR" id="B7GFQ4"/>
<dbReference type="STRING" id="491915.Aflv_0206"/>
<dbReference type="KEGG" id="afl:Aflv_0206"/>
<dbReference type="eggNOG" id="COG0533">
    <property type="taxonomic scope" value="Bacteria"/>
</dbReference>
<dbReference type="HOGENOM" id="CLU_023208_0_2_9"/>
<dbReference type="Proteomes" id="UP000000742">
    <property type="component" value="Chromosome"/>
</dbReference>
<dbReference type="GO" id="GO:0005737">
    <property type="term" value="C:cytoplasm"/>
    <property type="evidence" value="ECO:0007669"/>
    <property type="project" value="UniProtKB-SubCell"/>
</dbReference>
<dbReference type="GO" id="GO:0005506">
    <property type="term" value="F:iron ion binding"/>
    <property type="evidence" value="ECO:0007669"/>
    <property type="project" value="UniProtKB-UniRule"/>
</dbReference>
<dbReference type="GO" id="GO:0061711">
    <property type="term" value="F:N(6)-L-threonylcarbamoyladenine synthase activity"/>
    <property type="evidence" value="ECO:0007669"/>
    <property type="project" value="UniProtKB-EC"/>
</dbReference>
<dbReference type="GO" id="GO:0002949">
    <property type="term" value="P:tRNA threonylcarbamoyladenosine modification"/>
    <property type="evidence" value="ECO:0007669"/>
    <property type="project" value="UniProtKB-UniRule"/>
</dbReference>
<dbReference type="CDD" id="cd24133">
    <property type="entry name" value="ASKHA_NBD_TsaD_bac"/>
    <property type="match status" value="1"/>
</dbReference>
<dbReference type="FunFam" id="3.30.420.40:FF:000012">
    <property type="entry name" value="tRNA N6-adenosine threonylcarbamoyltransferase"/>
    <property type="match status" value="1"/>
</dbReference>
<dbReference type="FunFam" id="3.30.420.40:FF:000040">
    <property type="entry name" value="tRNA N6-adenosine threonylcarbamoyltransferase"/>
    <property type="match status" value="1"/>
</dbReference>
<dbReference type="Gene3D" id="3.30.420.40">
    <property type="match status" value="2"/>
</dbReference>
<dbReference type="HAMAP" id="MF_01445">
    <property type="entry name" value="TsaD"/>
    <property type="match status" value="1"/>
</dbReference>
<dbReference type="InterPro" id="IPR043129">
    <property type="entry name" value="ATPase_NBD"/>
</dbReference>
<dbReference type="InterPro" id="IPR000905">
    <property type="entry name" value="Gcp-like_dom"/>
</dbReference>
<dbReference type="InterPro" id="IPR017861">
    <property type="entry name" value="KAE1/TsaD"/>
</dbReference>
<dbReference type="InterPro" id="IPR017860">
    <property type="entry name" value="Peptidase_M22_CS"/>
</dbReference>
<dbReference type="InterPro" id="IPR022450">
    <property type="entry name" value="TsaD"/>
</dbReference>
<dbReference type="NCBIfam" id="TIGR00329">
    <property type="entry name" value="gcp_kae1"/>
    <property type="match status" value="1"/>
</dbReference>
<dbReference type="NCBIfam" id="TIGR03723">
    <property type="entry name" value="T6A_TsaD_YgjD"/>
    <property type="match status" value="1"/>
</dbReference>
<dbReference type="PANTHER" id="PTHR11735">
    <property type="entry name" value="TRNA N6-ADENOSINE THREONYLCARBAMOYLTRANSFERASE"/>
    <property type="match status" value="1"/>
</dbReference>
<dbReference type="PANTHER" id="PTHR11735:SF6">
    <property type="entry name" value="TRNA N6-ADENOSINE THREONYLCARBAMOYLTRANSFERASE, MITOCHONDRIAL"/>
    <property type="match status" value="1"/>
</dbReference>
<dbReference type="Pfam" id="PF00814">
    <property type="entry name" value="TsaD"/>
    <property type="match status" value="1"/>
</dbReference>
<dbReference type="PRINTS" id="PR00789">
    <property type="entry name" value="OSIALOPTASE"/>
</dbReference>
<dbReference type="SUPFAM" id="SSF53067">
    <property type="entry name" value="Actin-like ATPase domain"/>
    <property type="match status" value="2"/>
</dbReference>
<dbReference type="PROSITE" id="PS01016">
    <property type="entry name" value="GLYCOPROTEASE"/>
    <property type="match status" value="1"/>
</dbReference>
<gene>
    <name evidence="1" type="primary">tsaD</name>
    <name type="synonym">gcp</name>
    <name type="ordered locus">Aflv_0206</name>
</gene>
<keyword id="KW-0012">Acyltransferase</keyword>
<keyword id="KW-0963">Cytoplasm</keyword>
<keyword id="KW-0408">Iron</keyword>
<keyword id="KW-0479">Metal-binding</keyword>
<keyword id="KW-0808">Transferase</keyword>
<keyword id="KW-0819">tRNA processing</keyword>
<organism>
    <name type="scientific">Anoxybacillus flavithermus (strain DSM 21510 / WK1)</name>
    <dbReference type="NCBI Taxonomy" id="491915"/>
    <lineage>
        <taxon>Bacteria</taxon>
        <taxon>Bacillati</taxon>
        <taxon>Bacillota</taxon>
        <taxon>Bacilli</taxon>
        <taxon>Bacillales</taxon>
        <taxon>Anoxybacillaceae</taxon>
        <taxon>Anoxybacillus</taxon>
    </lineage>
</organism>
<feature type="chain" id="PRO_1000145947" description="tRNA N6-adenosine threonylcarbamoyltransferase">
    <location>
        <begin position="1"/>
        <end position="341"/>
    </location>
</feature>
<feature type="binding site" evidence="1">
    <location>
        <position position="120"/>
    </location>
    <ligand>
        <name>Fe cation</name>
        <dbReference type="ChEBI" id="CHEBI:24875"/>
    </ligand>
</feature>
<feature type="binding site" evidence="1">
    <location>
        <position position="124"/>
    </location>
    <ligand>
        <name>Fe cation</name>
        <dbReference type="ChEBI" id="CHEBI:24875"/>
    </ligand>
</feature>
<feature type="binding site" evidence="1">
    <location>
        <begin position="142"/>
        <end position="146"/>
    </location>
    <ligand>
        <name>substrate</name>
    </ligand>
</feature>
<feature type="binding site" evidence="1">
    <location>
        <position position="175"/>
    </location>
    <ligand>
        <name>substrate</name>
    </ligand>
</feature>
<feature type="binding site" evidence="1">
    <location>
        <position position="188"/>
    </location>
    <ligand>
        <name>substrate</name>
    </ligand>
</feature>
<feature type="binding site" evidence="1">
    <location>
        <position position="192"/>
    </location>
    <ligand>
        <name>substrate</name>
    </ligand>
</feature>
<feature type="binding site" evidence="1">
    <location>
        <position position="281"/>
    </location>
    <ligand>
        <name>substrate</name>
    </ligand>
</feature>
<feature type="binding site" evidence="1">
    <location>
        <position position="310"/>
    </location>
    <ligand>
        <name>Fe cation</name>
        <dbReference type="ChEBI" id="CHEBI:24875"/>
    </ligand>
</feature>
<proteinExistence type="inferred from homology"/>
<comment type="function">
    <text evidence="1">Required for the formation of a threonylcarbamoyl group on adenosine at position 37 (t(6)A37) in tRNAs that read codons beginning with adenine. Is involved in the transfer of the threonylcarbamoyl moiety of threonylcarbamoyl-AMP (TC-AMP) to the N6 group of A37, together with TsaE and TsaB. TsaD likely plays a direct catalytic role in this reaction.</text>
</comment>
<comment type="catalytic activity">
    <reaction evidence="1">
        <text>L-threonylcarbamoyladenylate + adenosine(37) in tRNA = N(6)-L-threonylcarbamoyladenosine(37) in tRNA + AMP + H(+)</text>
        <dbReference type="Rhea" id="RHEA:37059"/>
        <dbReference type="Rhea" id="RHEA-COMP:10162"/>
        <dbReference type="Rhea" id="RHEA-COMP:10163"/>
        <dbReference type="ChEBI" id="CHEBI:15378"/>
        <dbReference type="ChEBI" id="CHEBI:73682"/>
        <dbReference type="ChEBI" id="CHEBI:74411"/>
        <dbReference type="ChEBI" id="CHEBI:74418"/>
        <dbReference type="ChEBI" id="CHEBI:456215"/>
        <dbReference type="EC" id="2.3.1.234"/>
    </reaction>
</comment>
<comment type="cofactor">
    <cofactor evidence="1">
        <name>Fe(2+)</name>
        <dbReference type="ChEBI" id="CHEBI:29033"/>
    </cofactor>
    <text evidence="1">Binds 1 Fe(2+) ion per subunit.</text>
</comment>
<comment type="subcellular location">
    <subcellularLocation>
        <location evidence="1">Cytoplasm</location>
    </subcellularLocation>
</comment>
<comment type="similarity">
    <text evidence="1">Belongs to the KAE1 / TsaD family.</text>
</comment>
<reference key="1">
    <citation type="journal article" date="2008" name="Genome Biol.">
        <title>Encapsulated in silica: genome, proteome and physiology of the thermophilic bacterium Anoxybacillus flavithermus WK1.</title>
        <authorList>
            <person name="Saw J.H."/>
            <person name="Mountain B.W."/>
            <person name="Feng L."/>
            <person name="Omelchenko M.V."/>
            <person name="Hou S."/>
            <person name="Saito J.A."/>
            <person name="Stott M.B."/>
            <person name="Li D."/>
            <person name="Zhao G."/>
            <person name="Wu J."/>
            <person name="Galperin M.Y."/>
            <person name="Koonin E.V."/>
            <person name="Makarova K.S."/>
            <person name="Wolf Y.I."/>
            <person name="Rigden D.J."/>
            <person name="Dunfield P.F."/>
            <person name="Wang L."/>
            <person name="Alam M."/>
        </authorList>
    </citation>
    <scope>NUCLEOTIDE SEQUENCE [LARGE SCALE GENOMIC DNA]</scope>
    <source>
        <strain>DSM 21510 / WK1</strain>
    </source>
</reference>
<sequence>MGEFMNKKDMFVLGIETSCDETAAAIVKNGREIVANVVASQMESHQRFGGVVPEIASRHHVEQITLVLEETMKQANMDISQLDAIAVTEGPGLVGALLIGVNAAKALAFAHRIPLVGVHHIAGHIYANQLVQEMKFPLLALVVSGGHTELIYMKEHGIFEVIGETRDDAAGEAYDKVARALQLPYPGGPHIDRLAKQGKPIIDLPRAWLEEGSYDFSFSGLKSAVINTLHNAKQRGEMIRPEDMAASFQASVVEVLVRKTIEAAMHYSVKQILLAGGVAANEGLRTQLQKQMDQLPEVELVIPPLSLCTDNAAMIAAAGTVLFQQGKRATMALNANPSLLL</sequence>
<accession>B7GFQ4</accession>
<name>TSAD_ANOFW</name>
<evidence type="ECO:0000255" key="1">
    <source>
        <dbReference type="HAMAP-Rule" id="MF_01445"/>
    </source>
</evidence>
<protein>
    <recommendedName>
        <fullName evidence="1">tRNA N6-adenosine threonylcarbamoyltransferase</fullName>
        <ecNumber evidence="1">2.3.1.234</ecNumber>
    </recommendedName>
    <alternativeName>
        <fullName evidence="1">N6-L-threonylcarbamoyladenine synthase</fullName>
        <shortName evidence="1">t(6)A synthase</shortName>
    </alternativeName>
    <alternativeName>
        <fullName evidence="1">t(6)A37 threonylcarbamoyladenosine biosynthesis protein TsaD</fullName>
    </alternativeName>
    <alternativeName>
        <fullName evidence="1">tRNA threonylcarbamoyladenosine biosynthesis protein TsaD</fullName>
    </alternativeName>
</protein>